<reference key="1">
    <citation type="journal article" date="2006" name="J. Bacteriol.">
        <title>Complete genome sequence of Yersinia pestis strains Antiqua and Nepal516: evidence of gene reduction in an emerging pathogen.</title>
        <authorList>
            <person name="Chain P.S.G."/>
            <person name="Hu P."/>
            <person name="Malfatti S.A."/>
            <person name="Radnedge L."/>
            <person name="Larimer F."/>
            <person name="Vergez L.M."/>
            <person name="Worsham P."/>
            <person name="Chu M.C."/>
            <person name="Andersen G.L."/>
        </authorList>
    </citation>
    <scope>NUCLEOTIDE SEQUENCE [LARGE SCALE GENOMIC DNA]</scope>
    <source>
        <strain>Antiqua</strain>
    </source>
</reference>
<name>EPMA_YERPA</name>
<gene>
    <name evidence="1" type="primary">epmA</name>
    <name type="synonym">yjeA</name>
    <name type="ordered locus">YPA_3922</name>
</gene>
<sequence length="325" mass="36700">MSDTASWQPSAPIANLLKRAAIMAEIRRFFADRGVLEVETPTMSQATVTDIHLVPFETRFVGPGAADGLTLYMMTSPEYHMKRLLAAGSGPIYQLGRSFRNEEAGRYHNPEFTMLEWYRPHYDMYRLMNEVDDLLQQILDCNSAETLSYQQAFLRHLNIDPLSAEKAQLREVAAKLDLSNIADTEEDRDTLLQLLFTVGVEPYIGRDKPAFIYHFPASQASLAEISTEDHRVAERFEVYFKGIELANGFRELTDGDEQLQRFEQDNRNRAKRGLPQNPIDMNLIAALKQGLPDCSGVALGVDRLVMLALNAERLSDVIAFPVNIA</sequence>
<accession>Q1C0Y9</accession>
<dbReference type="EC" id="6.3.2.-" evidence="1"/>
<dbReference type="EMBL" id="CP000308">
    <property type="protein sequence ID" value="ABG15883.1"/>
    <property type="molecule type" value="Genomic_DNA"/>
</dbReference>
<dbReference type="RefSeq" id="WP_002209139.1">
    <property type="nucleotide sequence ID" value="NZ_CP009906.1"/>
</dbReference>
<dbReference type="SMR" id="Q1C0Y9"/>
<dbReference type="GeneID" id="57974246"/>
<dbReference type="KEGG" id="ypa:YPA_3922"/>
<dbReference type="Proteomes" id="UP000001971">
    <property type="component" value="Chromosome"/>
</dbReference>
<dbReference type="GO" id="GO:0005829">
    <property type="term" value="C:cytosol"/>
    <property type="evidence" value="ECO:0007669"/>
    <property type="project" value="TreeGrafter"/>
</dbReference>
<dbReference type="GO" id="GO:0016880">
    <property type="term" value="F:acid-ammonia (or amide) ligase activity"/>
    <property type="evidence" value="ECO:0007669"/>
    <property type="project" value="UniProtKB-UniRule"/>
</dbReference>
<dbReference type="GO" id="GO:0005524">
    <property type="term" value="F:ATP binding"/>
    <property type="evidence" value="ECO:0007669"/>
    <property type="project" value="UniProtKB-UniRule"/>
</dbReference>
<dbReference type="GO" id="GO:0004824">
    <property type="term" value="F:lysine-tRNA ligase activity"/>
    <property type="evidence" value="ECO:0007669"/>
    <property type="project" value="InterPro"/>
</dbReference>
<dbReference type="GO" id="GO:0000049">
    <property type="term" value="F:tRNA binding"/>
    <property type="evidence" value="ECO:0007669"/>
    <property type="project" value="TreeGrafter"/>
</dbReference>
<dbReference type="GO" id="GO:0006430">
    <property type="term" value="P:lysyl-tRNA aminoacylation"/>
    <property type="evidence" value="ECO:0007669"/>
    <property type="project" value="InterPro"/>
</dbReference>
<dbReference type="FunFam" id="3.30.930.10:FF:000017">
    <property type="entry name" value="Elongation factor P--(R)-beta-lysine ligase"/>
    <property type="match status" value="1"/>
</dbReference>
<dbReference type="Gene3D" id="3.30.930.10">
    <property type="entry name" value="Bira Bifunctional Protein, Domain 2"/>
    <property type="match status" value="1"/>
</dbReference>
<dbReference type="HAMAP" id="MF_00174">
    <property type="entry name" value="EF_P_modif_A"/>
    <property type="match status" value="1"/>
</dbReference>
<dbReference type="InterPro" id="IPR004364">
    <property type="entry name" value="Aa-tRNA-synt_II"/>
</dbReference>
<dbReference type="InterPro" id="IPR006195">
    <property type="entry name" value="aa-tRNA-synth_II"/>
</dbReference>
<dbReference type="InterPro" id="IPR045864">
    <property type="entry name" value="aa-tRNA-synth_II/BPL/LPL"/>
</dbReference>
<dbReference type="InterPro" id="IPR004525">
    <property type="entry name" value="EpmA"/>
</dbReference>
<dbReference type="InterPro" id="IPR018149">
    <property type="entry name" value="Lys-tRNA-synth_II_C"/>
</dbReference>
<dbReference type="NCBIfam" id="TIGR00462">
    <property type="entry name" value="genX"/>
    <property type="match status" value="1"/>
</dbReference>
<dbReference type="NCBIfam" id="NF006828">
    <property type="entry name" value="PRK09350.1"/>
    <property type="match status" value="1"/>
</dbReference>
<dbReference type="PANTHER" id="PTHR42918:SF6">
    <property type="entry name" value="ELONGATION FACTOR P--(R)-BETA-LYSINE LIGASE"/>
    <property type="match status" value="1"/>
</dbReference>
<dbReference type="PANTHER" id="PTHR42918">
    <property type="entry name" value="LYSYL-TRNA SYNTHETASE"/>
    <property type="match status" value="1"/>
</dbReference>
<dbReference type="Pfam" id="PF00152">
    <property type="entry name" value="tRNA-synt_2"/>
    <property type="match status" value="1"/>
</dbReference>
<dbReference type="PRINTS" id="PR00982">
    <property type="entry name" value="TRNASYNTHLYS"/>
</dbReference>
<dbReference type="SUPFAM" id="SSF55681">
    <property type="entry name" value="Class II aaRS and biotin synthetases"/>
    <property type="match status" value="1"/>
</dbReference>
<dbReference type="PROSITE" id="PS50862">
    <property type="entry name" value="AA_TRNA_LIGASE_II"/>
    <property type="match status" value="1"/>
</dbReference>
<comment type="function">
    <text evidence="1">With EpmB is involved in the beta-lysylation step of the post-translational modification of translation elongation factor P (EF-P). Catalyzes the ATP-dependent activation of (R)-beta-lysine produced by EpmB, forming a lysyl-adenylate, from which the beta-lysyl moiety is then transferred to the epsilon-amino group of a conserved specific lysine residue in EF-P.</text>
</comment>
<comment type="catalytic activity">
    <reaction evidence="1">
        <text>D-beta-lysine + L-lysyl-[protein] + ATP = N(6)-((3R)-3,6-diaminohexanoyl)-L-lysyl-[protein] + AMP + diphosphate + H(+)</text>
        <dbReference type="Rhea" id="RHEA:83435"/>
        <dbReference type="Rhea" id="RHEA-COMP:9752"/>
        <dbReference type="Rhea" id="RHEA-COMP:20131"/>
        <dbReference type="ChEBI" id="CHEBI:15378"/>
        <dbReference type="ChEBI" id="CHEBI:29969"/>
        <dbReference type="ChEBI" id="CHEBI:30616"/>
        <dbReference type="ChEBI" id="CHEBI:33019"/>
        <dbReference type="ChEBI" id="CHEBI:84138"/>
        <dbReference type="ChEBI" id="CHEBI:156053"/>
        <dbReference type="ChEBI" id="CHEBI:456215"/>
    </reaction>
    <physiologicalReaction direction="left-to-right" evidence="1">
        <dbReference type="Rhea" id="RHEA:83436"/>
    </physiologicalReaction>
</comment>
<comment type="subunit">
    <text evidence="1">Homodimer.</text>
</comment>
<comment type="similarity">
    <text evidence="1">Belongs to the class-II aminoacyl-tRNA synthetase family. EpmA subfamily.</text>
</comment>
<protein>
    <recommendedName>
        <fullName evidence="1">Elongation factor P--(R)-beta-lysine ligase</fullName>
        <shortName evidence="1">EF-P--(R)-beta-lysine ligase</shortName>
        <ecNumber evidence="1">6.3.2.-</ecNumber>
    </recommendedName>
    <alternativeName>
        <fullName evidence="1">EF-P post-translational modification enzyme A</fullName>
    </alternativeName>
    <alternativeName>
        <fullName evidence="1">EF-P-lysine lysyltransferase</fullName>
    </alternativeName>
</protein>
<feature type="chain" id="PRO_1000023635" description="Elongation factor P--(R)-beta-lysine ligase">
    <location>
        <begin position="1"/>
        <end position="325"/>
    </location>
</feature>
<feature type="binding site" evidence="1">
    <location>
        <begin position="76"/>
        <end position="78"/>
    </location>
    <ligand>
        <name>substrate</name>
    </ligand>
</feature>
<feature type="binding site" evidence="1">
    <location>
        <begin position="100"/>
        <end position="102"/>
    </location>
    <ligand>
        <name>ATP</name>
        <dbReference type="ChEBI" id="CHEBI:30616"/>
    </ligand>
</feature>
<feature type="binding site" evidence="1">
    <location>
        <position position="109"/>
    </location>
    <ligand>
        <name>ATP</name>
        <dbReference type="ChEBI" id="CHEBI:30616"/>
    </ligand>
</feature>
<feature type="binding site" evidence="1">
    <location>
        <position position="118"/>
    </location>
    <ligand>
        <name>substrate</name>
    </ligand>
</feature>
<feature type="binding site" evidence="1">
    <location>
        <begin position="244"/>
        <end position="245"/>
    </location>
    <ligand>
        <name>ATP</name>
        <dbReference type="ChEBI" id="CHEBI:30616"/>
    </ligand>
</feature>
<feature type="binding site" evidence="1">
    <location>
        <position position="251"/>
    </location>
    <ligand>
        <name>substrate</name>
    </ligand>
</feature>
<feature type="binding site" evidence="1">
    <location>
        <position position="300"/>
    </location>
    <ligand>
        <name>ATP</name>
        <dbReference type="ChEBI" id="CHEBI:30616"/>
    </ligand>
</feature>
<proteinExistence type="inferred from homology"/>
<evidence type="ECO:0000255" key="1">
    <source>
        <dbReference type="HAMAP-Rule" id="MF_00174"/>
    </source>
</evidence>
<keyword id="KW-0067">ATP-binding</keyword>
<keyword id="KW-0436">Ligase</keyword>
<keyword id="KW-0547">Nucleotide-binding</keyword>
<organism>
    <name type="scientific">Yersinia pestis bv. Antiqua (strain Antiqua)</name>
    <dbReference type="NCBI Taxonomy" id="360102"/>
    <lineage>
        <taxon>Bacteria</taxon>
        <taxon>Pseudomonadati</taxon>
        <taxon>Pseudomonadota</taxon>
        <taxon>Gammaproteobacteria</taxon>
        <taxon>Enterobacterales</taxon>
        <taxon>Yersiniaceae</taxon>
        <taxon>Yersinia</taxon>
    </lineage>
</organism>